<gene>
    <name evidence="1" type="primary">infA</name>
    <name type="ordered locus">amb3339</name>
</gene>
<comment type="function">
    <text evidence="1">One of the essential components for the initiation of protein synthesis. Stabilizes the binding of IF-2 and IF-3 on the 30S subunit to which N-formylmethionyl-tRNA(fMet) subsequently binds. Helps modulate mRNA selection, yielding the 30S pre-initiation complex (PIC). Upon addition of the 50S ribosomal subunit IF-1, IF-2 and IF-3 are released leaving the mature 70S translation initiation complex.</text>
</comment>
<comment type="subunit">
    <text evidence="1">Component of the 30S ribosomal translation pre-initiation complex which assembles on the 30S ribosome in the order IF-2 and IF-3, IF-1 and N-formylmethionyl-tRNA(fMet); mRNA recruitment can occur at any time during PIC assembly.</text>
</comment>
<comment type="subcellular location">
    <subcellularLocation>
        <location evidence="1">Cytoplasm</location>
    </subcellularLocation>
</comment>
<comment type="similarity">
    <text evidence="1">Belongs to the IF-1 family.</text>
</comment>
<comment type="sequence caution" evidence="2">
    <conflict type="erroneous initiation">
        <sequence resource="EMBL-CDS" id="BAE52143"/>
    </conflict>
    <text>Extended N-terminus.</text>
</comment>
<protein>
    <recommendedName>
        <fullName evidence="1">Translation initiation factor IF-1</fullName>
    </recommendedName>
</protein>
<feature type="chain" id="PRO_0000263816" description="Translation initiation factor IF-1">
    <location>
        <begin position="1"/>
        <end position="72"/>
    </location>
</feature>
<feature type="domain" description="S1-like" evidence="1">
    <location>
        <begin position="1"/>
        <end position="72"/>
    </location>
</feature>
<organism>
    <name type="scientific">Paramagnetospirillum magneticum (strain ATCC 700264 / AMB-1)</name>
    <name type="common">Magnetospirillum magneticum</name>
    <dbReference type="NCBI Taxonomy" id="342108"/>
    <lineage>
        <taxon>Bacteria</taxon>
        <taxon>Pseudomonadati</taxon>
        <taxon>Pseudomonadota</taxon>
        <taxon>Alphaproteobacteria</taxon>
        <taxon>Rhodospirillales</taxon>
        <taxon>Magnetospirillaceae</taxon>
        <taxon>Paramagnetospirillum</taxon>
    </lineage>
</organism>
<keyword id="KW-0963">Cytoplasm</keyword>
<keyword id="KW-0396">Initiation factor</keyword>
<keyword id="KW-0648">Protein biosynthesis</keyword>
<keyword id="KW-0694">RNA-binding</keyword>
<keyword id="KW-0699">rRNA-binding</keyword>
<sequence>MAKEDVIEFSGTVTELLPNAMFRVKLDNDHEILAHTSGKMRKNRIRVLAGDRVNVEMTPYDLTKGRITFRYK</sequence>
<name>IF1_PARM1</name>
<dbReference type="EMBL" id="AP007255">
    <property type="protein sequence ID" value="BAE52143.1"/>
    <property type="status" value="ALT_INIT"/>
    <property type="molecule type" value="Genomic_DNA"/>
</dbReference>
<dbReference type="RefSeq" id="WP_008617671.1">
    <property type="nucleotide sequence ID" value="NC_007626.1"/>
</dbReference>
<dbReference type="SMR" id="Q2W1Y2"/>
<dbReference type="STRING" id="342108.amb3339"/>
<dbReference type="KEGG" id="mag:amb3339"/>
<dbReference type="HOGENOM" id="CLU_1956934_0_0_5"/>
<dbReference type="OrthoDB" id="9803250at2"/>
<dbReference type="Proteomes" id="UP000007058">
    <property type="component" value="Chromosome"/>
</dbReference>
<dbReference type="GO" id="GO:0005829">
    <property type="term" value="C:cytosol"/>
    <property type="evidence" value="ECO:0007669"/>
    <property type="project" value="TreeGrafter"/>
</dbReference>
<dbReference type="GO" id="GO:0043022">
    <property type="term" value="F:ribosome binding"/>
    <property type="evidence" value="ECO:0007669"/>
    <property type="project" value="UniProtKB-UniRule"/>
</dbReference>
<dbReference type="GO" id="GO:0019843">
    <property type="term" value="F:rRNA binding"/>
    <property type="evidence" value="ECO:0007669"/>
    <property type="project" value="UniProtKB-UniRule"/>
</dbReference>
<dbReference type="GO" id="GO:0003743">
    <property type="term" value="F:translation initiation factor activity"/>
    <property type="evidence" value="ECO:0007669"/>
    <property type="project" value="UniProtKB-UniRule"/>
</dbReference>
<dbReference type="CDD" id="cd04451">
    <property type="entry name" value="S1_IF1"/>
    <property type="match status" value="1"/>
</dbReference>
<dbReference type="FunFam" id="2.40.50.140:FF:000002">
    <property type="entry name" value="Translation initiation factor IF-1"/>
    <property type="match status" value="1"/>
</dbReference>
<dbReference type="Gene3D" id="2.40.50.140">
    <property type="entry name" value="Nucleic acid-binding proteins"/>
    <property type="match status" value="1"/>
</dbReference>
<dbReference type="HAMAP" id="MF_00075">
    <property type="entry name" value="IF_1"/>
    <property type="match status" value="1"/>
</dbReference>
<dbReference type="InterPro" id="IPR012340">
    <property type="entry name" value="NA-bd_OB-fold"/>
</dbReference>
<dbReference type="InterPro" id="IPR006196">
    <property type="entry name" value="RNA-binding_domain_S1_IF1"/>
</dbReference>
<dbReference type="InterPro" id="IPR003029">
    <property type="entry name" value="S1_domain"/>
</dbReference>
<dbReference type="InterPro" id="IPR004368">
    <property type="entry name" value="TIF_IF1"/>
</dbReference>
<dbReference type="NCBIfam" id="TIGR00008">
    <property type="entry name" value="infA"/>
    <property type="match status" value="1"/>
</dbReference>
<dbReference type="PANTHER" id="PTHR33370">
    <property type="entry name" value="TRANSLATION INITIATION FACTOR IF-1, CHLOROPLASTIC"/>
    <property type="match status" value="1"/>
</dbReference>
<dbReference type="PANTHER" id="PTHR33370:SF1">
    <property type="entry name" value="TRANSLATION INITIATION FACTOR IF-1, CHLOROPLASTIC"/>
    <property type="match status" value="1"/>
</dbReference>
<dbReference type="Pfam" id="PF01176">
    <property type="entry name" value="eIF-1a"/>
    <property type="match status" value="1"/>
</dbReference>
<dbReference type="SMART" id="SM00316">
    <property type="entry name" value="S1"/>
    <property type="match status" value="1"/>
</dbReference>
<dbReference type="SUPFAM" id="SSF50249">
    <property type="entry name" value="Nucleic acid-binding proteins"/>
    <property type="match status" value="1"/>
</dbReference>
<dbReference type="PROSITE" id="PS50832">
    <property type="entry name" value="S1_IF1_TYPE"/>
    <property type="match status" value="1"/>
</dbReference>
<accession>Q2W1Y2</accession>
<proteinExistence type="inferred from homology"/>
<evidence type="ECO:0000255" key="1">
    <source>
        <dbReference type="HAMAP-Rule" id="MF_00075"/>
    </source>
</evidence>
<evidence type="ECO:0000305" key="2"/>
<reference key="1">
    <citation type="journal article" date="2005" name="DNA Res.">
        <title>Complete genome sequence of the facultative anaerobic magnetotactic bacterium Magnetospirillum sp. strain AMB-1.</title>
        <authorList>
            <person name="Matsunaga T."/>
            <person name="Okamura Y."/>
            <person name="Fukuda Y."/>
            <person name="Wahyudi A.T."/>
            <person name="Murase Y."/>
            <person name="Takeyama H."/>
        </authorList>
    </citation>
    <scope>NUCLEOTIDE SEQUENCE [LARGE SCALE GENOMIC DNA]</scope>
    <source>
        <strain>ATCC 700264 / AMB-1</strain>
    </source>
</reference>